<comment type="subunit">
    <text evidence="1">Part of the 50S ribosomal subunit. Contacts protein L32.</text>
</comment>
<comment type="similarity">
    <text evidence="1">Belongs to the bacterial ribosomal protein bL17 family.</text>
</comment>
<sequence length="117" mass="13232">MAYSKLGRTSSQRKALLRDLATDLIINERIQTTEQKAKELRPVVEKLITLGKRGDLHARRQVASFVRKENAGEKDAIQKLFEDVAPRYAERQGGYTRIMKVGPRRGDGAEVVIIELV</sequence>
<feature type="chain" id="PRO_1000215007" description="Large ribosomal subunit protein bL17">
    <location>
        <begin position="1"/>
        <end position="117"/>
    </location>
</feature>
<name>RL17_EXISA</name>
<evidence type="ECO:0000255" key="1">
    <source>
        <dbReference type="HAMAP-Rule" id="MF_01368"/>
    </source>
</evidence>
<evidence type="ECO:0000305" key="2"/>
<dbReference type="EMBL" id="CP001615">
    <property type="protein sequence ID" value="ACQ70531.1"/>
    <property type="molecule type" value="Genomic_DNA"/>
</dbReference>
<dbReference type="RefSeq" id="WP_012727650.1">
    <property type="nucleotide sequence ID" value="NZ_MOEL01000001.1"/>
</dbReference>
<dbReference type="SMR" id="C4KZL8"/>
<dbReference type="STRING" id="360911.EAT1b_1605"/>
<dbReference type="GeneID" id="94370771"/>
<dbReference type="KEGG" id="eat:EAT1b_1605"/>
<dbReference type="eggNOG" id="COG0203">
    <property type="taxonomic scope" value="Bacteria"/>
</dbReference>
<dbReference type="HOGENOM" id="CLU_074407_2_2_9"/>
<dbReference type="OrthoDB" id="9809073at2"/>
<dbReference type="Proteomes" id="UP000000716">
    <property type="component" value="Chromosome"/>
</dbReference>
<dbReference type="GO" id="GO:0022625">
    <property type="term" value="C:cytosolic large ribosomal subunit"/>
    <property type="evidence" value="ECO:0007669"/>
    <property type="project" value="TreeGrafter"/>
</dbReference>
<dbReference type="GO" id="GO:0003735">
    <property type="term" value="F:structural constituent of ribosome"/>
    <property type="evidence" value="ECO:0007669"/>
    <property type="project" value="InterPro"/>
</dbReference>
<dbReference type="GO" id="GO:0006412">
    <property type="term" value="P:translation"/>
    <property type="evidence" value="ECO:0007669"/>
    <property type="project" value="UniProtKB-UniRule"/>
</dbReference>
<dbReference type="FunFam" id="3.90.1030.10:FF:000002">
    <property type="entry name" value="50S ribosomal protein L17"/>
    <property type="match status" value="1"/>
</dbReference>
<dbReference type="Gene3D" id="3.90.1030.10">
    <property type="entry name" value="Ribosomal protein L17"/>
    <property type="match status" value="1"/>
</dbReference>
<dbReference type="HAMAP" id="MF_01368">
    <property type="entry name" value="Ribosomal_bL17"/>
    <property type="match status" value="1"/>
</dbReference>
<dbReference type="InterPro" id="IPR000456">
    <property type="entry name" value="Ribosomal_bL17"/>
</dbReference>
<dbReference type="InterPro" id="IPR047859">
    <property type="entry name" value="Ribosomal_bL17_CS"/>
</dbReference>
<dbReference type="InterPro" id="IPR036373">
    <property type="entry name" value="Ribosomal_bL17_sf"/>
</dbReference>
<dbReference type="NCBIfam" id="TIGR00059">
    <property type="entry name" value="L17"/>
    <property type="match status" value="1"/>
</dbReference>
<dbReference type="PANTHER" id="PTHR14413:SF16">
    <property type="entry name" value="LARGE RIBOSOMAL SUBUNIT PROTEIN BL17M"/>
    <property type="match status" value="1"/>
</dbReference>
<dbReference type="PANTHER" id="PTHR14413">
    <property type="entry name" value="RIBOSOMAL PROTEIN L17"/>
    <property type="match status" value="1"/>
</dbReference>
<dbReference type="Pfam" id="PF01196">
    <property type="entry name" value="Ribosomal_L17"/>
    <property type="match status" value="1"/>
</dbReference>
<dbReference type="SUPFAM" id="SSF64263">
    <property type="entry name" value="Prokaryotic ribosomal protein L17"/>
    <property type="match status" value="1"/>
</dbReference>
<dbReference type="PROSITE" id="PS01167">
    <property type="entry name" value="RIBOSOMAL_L17"/>
    <property type="match status" value="1"/>
</dbReference>
<protein>
    <recommendedName>
        <fullName evidence="1">Large ribosomal subunit protein bL17</fullName>
    </recommendedName>
    <alternativeName>
        <fullName evidence="2">50S ribosomal protein L17</fullName>
    </alternativeName>
</protein>
<reference key="1">
    <citation type="journal article" date="2011" name="J. Bacteriol.">
        <title>Complete genome sequence of the Thermophilic Bacterium Exiguobacterium sp. AT1b.</title>
        <authorList>
            <person name="Vishnivetskaya T.A."/>
            <person name="Lucas S."/>
            <person name="Copeland A."/>
            <person name="Lapidus A."/>
            <person name="Glavina del Rio T."/>
            <person name="Dalin E."/>
            <person name="Tice H."/>
            <person name="Bruce D.C."/>
            <person name="Goodwin L.A."/>
            <person name="Pitluck S."/>
            <person name="Saunders E."/>
            <person name="Brettin T."/>
            <person name="Detter C."/>
            <person name="Han C."/>
            <person name="Larimer F."/>
            <person name="Land M.L."/>
            <person name="Hauser L.J."/>
            <person name="Kyrpides N.C."/>
            <person name="Ovchinnikova G."/>
            <person name="Kathariou S."/>
            <person name="Ramaley R.F."/>
            <person name="Rodrigues D.F."/>
            <person name="Hendrix C."/>
            <person name="Richardson P."/>
            <person name="Tiedje J.M."/>
        </authorList>
    </citation>
    <scope>NUCLEOTIDE SEQUENCE [LARGE SCALE GENOMIC DNA]</scope>
    <source>
        <strain>ATCC BAA-1283 / AT1b</strain>
    </source>
</reference>
<organism>
    <name type="scientific">Exiguobacterium sp. (strain ATCC BAA-1283 / AT1b)</name>
    <dbReference type="NCBI Taxonomy" id="360911"/>
    <lineage>
        <taxon>Bacteria</taxon>
        <taxon>Bacillati</taxon>
        <taxon>Bacillota</taxon>
        <taxon>Bacilli</taxon>
        <taxon>Bacillales</taxon>
        <taxon>Bacillales Family XII. Incertae Sedis</taxon>
        <taxon>Exiguobacterium</taxon>
    </lineage>
</organism>
<keyword id="KW-0687">Ribonucleoprotein</keyword>
<keyword id="KW-0689">Ribosomal protein</keyword>
<proteinExistence type="inferred from homology"/>
<gene>
    <name evidence="1" type="primary">rplQ</name>
    <name type="ordered locus">EAT1b_1605</name>
</gene>
<accession>C4KZL8</accession>